<evidence type="ECO:0000250" key="1"/>
<evidence type="ECO:0000255" key="2"/>
<evidence type="ECO:0000255" key="3">
    <source>
        <dbReference type="PROSITE-ProRule" id="PRU01161"/>
    </source>
</evidence>
<evidence type="ECO:0000256" key="4">
    <source>
        <dbReference type="SAM" id="MobiDB-lite"/>
    </source>
</evidence>
<evidence type="ECO:0000305" key="5"/>
<comment type="function">
    <text evidence="1">Intracellular phospholipase B that catalyzes the double deacylation of phosphatidylcholine (PC) to glycerophosphocholine (GroPCho). Plays an important role in membrane lipid homeostasis. Responsible for the rapid PC turnover in response to inositol, elevated temperatures, or when choline is present in the growth medium (By similarity).</text>
</comment>
<comment type="catalytic activity">
    <reaction>
        <text>a 1-acyl-sn-glycero-3-phosphocholine + H2O = sn-glycerol 3-phosphocholine + a fatty acid + H(+)</text>
        <dbReference type="Rhea" id="RHEA:15177"/>
        <dbReference type="ChEBI" id="CHEBI:15377"/>
        <dbReference type="ChEBI" id="CHEBI:15378"/>
        <dbReference type="ChEBI" id="CHEBI:16870"/>
        <dbReference type="ChEBI" id="CHEBI:28868"/>
        <dbReference type="ChEBI" id="CHEBI:58168"/>
        <dbReference type="EC" id="3.1.1.5"/>
    </reaction>
</comment>
<comment type="activity regulation">
    <text evidence="1">Inhibited by organophosphorus esters.</text>
</comment>
<comment type="subcellular location">
    <subcellularLocation>
        <location evidence="5">Endoplasmic reticulum membrane</location>
        <topology evidence="5">Single-pass type I membrane protein</topology>
    </subcellularLocation>
</comment>
<comment type="similarity">
    <text evidence="5">Belongs to the NTE family.</text>
</comment>
<organism>
    <name type="scientific">Lodderomyces elongisporus (strain ATCC 11503 / CBS 2605 / JCM 1781 / NBRC 1676 / NRRL YB-4239)</name>
    <name type="common">Yeast</name>
    <name type="synonym">Saccharomyces elongisporus</name>
    <dbReference type="NCBI Taxonomy" id="379508"/>
    <lineage>
        <taxon>Eukaryota</taxon>
        <taxon>Fungi</taxon>
        <taxon>Dikarya</taxon>
        <taxon>Ascomycota</taxon>
        <taxon>Saccharomycotina</taxon>
        <taxon>Pichiomycetes</taxon>
        <taxon>Debaryomycetaceae</taxon>
        <taxon>Candida/Lodderomyces clade</taxon>
        <taxon>Lodderomyces</taxon>
    </lineage>
</organism>
<reference key="1">
    <citation type="journal article" date="2009" name="Nature">
        <title>Evolution of pathogenicity and sexual reproduction in eight Candida genomes.</title>
        <authorList>
            <person name="Butler G."/>
            <person name="Rasmussen M.D."/>
            <person name="Lin M.F."/>
            <person name="Santos M.A.S."/>
            <person name="Sakthikumar S."/>
            <person name="Munro C.A."/>
            <person name="Rheinbay E."/>
            <person name="Grabherr M."/>
            <person name="Forche A."/>
            <person name="Reedy J.L."/>
            <person name="Agrafioti I."/>
            <person name="Arnaud M.B."/>
            <person name="Bates S."/>
            <person name="Brown A.J.P."/>
            <person name="Brunke S."/>
            <person name="Costanzo M.C."/>
            <person name="Fitzpatrick D.A."/>
            <person name="de Groot P.W.J."/>
            <person name="Harris D."/>
            <person name="Hoyer L.L."/>
            <person name="Hube B."/>
            <person name="Klis F.M."/>
            <person name="Kodira C."/>
            <person name="Lennard N."/>
            <person name="Logue M.E."/>
            <person name="Martin R."/>
            <person name="Neiman A.M."/>
            <person name="Nikolaou E."/>
            <person name="Quail M.A."/>
            <person name="Quinn J."/>
            <person name="Santos M.C."/>
            <person name="Schmitzberger F.F."/>
            <person name="Sherlock G."/>
            <person name="Shah P."/>
            <person name="Silverstein K.A.T."/>
            <person name="Skrzypek M.S."/>
            <person name="Soll D."/>
            <person name="Staggs R."/>
            <person name="Stansfield I."/>
            <person name="Stumpf M.P.H."/>
            <person name="Sudbery P.E."/>
            <person name="Srikantha T."/>
            <person name="Zeng Q."/>
            <person name="Berman J."/>
            <person name="Berriman M."/>
            <person name="Heitman J."/>
            <person name="Gow N.A.R."/>
            <person name="Lorenz M.C."/>
            <person name="Birren B.W."/>
            <person name="Kellis M."/>
            <person name="Cuomo C.A."/>
        </authorList>
    </citation>
    <scope>NUCLEOTIDE SEQUENCE [LARGE SCALE GENOMIC DNA]</scope>
    <source>
        <strain>ATCC 11503 / BCRC 21390 / CBS 2605 / JCM 1781 / NBRC 1676 / NRRL YB-4239</strain>
    </source>
</reference>
<feature type="chain" id="PRO_0000295323" description="Lysophospholipase NTE1">
    <location>
        <begin position="1"/>
        <end position="1443"/>
    </location>
</feature>
<feature type="topological domain" description="Lumenal" evidence="1">
    <location>
        <begin position="1"/>
        <end position="59"/>
    </location>
</feature>
<feature type="transmembrane region" description="Helical" evidence="2">
    <location>
        <begin position="60"/>
        <end position="80"/>
    </location>
</feature>
<feature type="topological domain" description="Cytoplasmic" evidence="1">
    <location>
        <begin position="81"/>
        <end position="1443"/>
    </location>
</feature>
<feature type="domain" description="PNPLA" evidence="3">
    <location>
        <begin position="1136"/>
        <end position="1300"/>
    </location>
</feature>
<feature type="region of interest" description="Disordered" evidence="4">
    <location>
        <begin position="103"/>
        <end position="122"/>
    </location>
</feature>
<feature type="region of interest" description="Disordered" evidence="4">
    <location>
        <begin position="199"/>
        <end position="251"/>
    </location>
</feature>
<feature type="short sequence motif" description="GXGXXG" evidence="3">
    <location>
        <begin position="1140"/>
        <end position="1145"/>
    </location>
</feature>
<feature type="short sequence motif" description="GXSXG" evidence="3">
    <location>
        <begin position="1167"/>
        <end position="1171"/>
    </location>
</feature>
<feature type="short sequence motif" description="DGA/G" evidence="3">
    <location>
        <begin position="1287"/>
        <end position="1289"/>
    </location>
</feature>
<feature type="compositionally biased region" description="Polar residues" evidence="4">
    <location>
        <begin position="103"/>
        <end position="118"/>
    </location>
</feature>
<feature type="compositionally biased region" description="Acidic residues" evidence="4">
    <location>
        <begin position="210"/>
        <end position="235"/>
    </location>
</feature>
<feature type="active site" description="Nucleophile" evidence="3">
    <location>
        <position position="1169"/>
    </location>
</feature>
<feature type="active site" description="Proton acceptor" evidence="3">
    <location>
        <position position="1287"/>
    </location>
</feature>
<feature type="binding site">
    <location>
        <begin position="619"/>
        <end position="750"/>
    </location>
    <ligand>
        <name>a nucleoside 3',5'-cyclic phosphate</name>
        <dbReference type="ChEBI" id="CHEBI:58464"/>
        <label>1</label>
    </ligand>
</feature>
<feature type="binding site">
    <location>
        <begin position="746"/>
        <end position="871"/>
    </location>
    <ligand>
        <name>a nucleoside 3',5'-cyclic phosphate</name>
        <dbReference type="ChEBI" id="CHEBI:58464"/>
        <label>2</label>
    </ligand>
</feature>
<sequence length="1443" mass="161900">MEEELAIEDLPRLTGTVSLNNGLLHSIYNETTVFKILRWSLVEIPKYILKLMSKNLEINLNVSSILIITLLIAAGILVIVRYKFLTGYSEDIKKGGSNANTKALGQQSTNYPKSTSSGLFVEKSKDKKPSNYLDEFLMAIKVFGYLDKQVFHELTKSMTTQKLSRDEVMCLDEKIGFLIVVEGTAQVYTKVTKKSNRNKYDELGQNGRDEGEEADEDDEEEEKEVGDDGDDEMDVEAMRNRGNGTKNGKMHGLDTDNFEENDDFLKLGEQNYQLLNEVKSGAALSSLISTLDLFKPLKSESTLTPLDSMGSGVSLNLDYLDRAGARLKALENDSDADTRDSTYPDIIVRPKKKKHSDTITVAIIPQSAFERVQMKYPKSTSHIVTMVLTRLYKVTMTTIHNYLGLTGEIFKLEIELNKSCELGLPRYLVDGLIERLSQGGSNERKQQAKHFRRSPLERTQSRYVLLNSRVKSNNPGDLLSSVPISRDDPKLRVNKSSAPTLVDGSNRINFTDNIEETEENSLRIAIIENIFKIVGINEAQNLPHEQAPFRSLNSSANSSSIALNSPGYFSPNLPATTGRHHNVLKFSSNDSLMNTISLSQLKSQKTHSISRGSTTQKQLYKRRNPITEMNIKDAFAKVMELKYIEPNTTVVQQNSVFCGLYYVINGSLEVHYKQAETYSKSATSKHVYTVGAGGIAGYMSCVVGFRSLVSIKTPKKTGAVVAYIAKNDYNQLLDKFYFLQLPMATKLKSLLSKQVMTIDYALEWCHIPAGNVLCSQGDLANGFHVVLSGRFRVVRKEKRKGSNRDEVKVLGEYGHGESIGEVEVLTASRRSNSLIAVRDSETARIPRTLFEILSFQNPSIMVKVSRLVASKVLSSEKTLSQATHSFITSSSNESFISADYKTITILPTVSGLPVRDFADKLVHSLKAIGRNVIALDQALTLTHLGRHAFDESLVRLKLSGYFAYLEEEYETVVYICDTPVQSNWTSTCISQGDCVLLLADADDQYTASSVGEYEQLLIKMKTTARTDLCLIHQEKFVVSGSTSRWLKNRMWVQGHHHIQMYIERNNETIGPGKKSFINEMAAKFVQNKSLISKFEEARSKALSWRREEQLKDLTLGSHKSDFLRLARILSNEAVGLVLGGGGSRGISHVGVVTALERHGIPVDLIGGTSIGSFVGGLYAKDYNIVSIYGRAKKFSKRVSSVWRMIFDLTYPVTSYITGYEFNRGIWKVFGFTEIEDFWIKYFCNSTNITNSTMDIHESGYAWRFIRASMSLAGLLPPIAFKGCMLLDGGYLDNLPVMEMKRRGAKHIFAVDVGSVDDRTPMDYGDTLSGFWVVFNKWNPFSKHPNVPNMMDIQLRLAYVASVNALEEAKRTPGVYYLRPPIDNYATLDFGKFDEIYQVGLGYADKLFTEWENKKQLPEIAGFVKRDGMQNGGERIKMYRRNTM</sequence>
<accession>A5E708</accession>
<gene>
    <name type="primary">NTE1</name>
    <name type="ORF">LELG_05397</name>
</gene>
<proteinExistence type="inferred from homology"/>
<name>NTE1_LODEL</name>
<protein>
    <recommendedName>
        <fullName>Lysophospholipase NTE1</fullName>
        <ecNumber>3.1.1.5</ecNumber>
    </recommendedName>
    <alternativeName>
        <fullName>Intracellular phospholipase B</fullName>
    </alternativeName>
    <alternativeName>
        <fullName>Neuropathy target esterase homolog</fullName>
    </alternativeName>
</protein>
<dbReference type="EC" id="3.1.1.5"/>
<dbReference type="EMBL" id="CH981532">
    <property type="protein sequence ID" value="EDK47216.1"/>
    <property type="molecule type" value="Genomic_DNA"/>
</dbReference>
<dbReference type="RefSeq" id="XP_001523551.1">
    <property type="nucleotide sequence ID" value="XM_001523501.1"/>
</dbReference>
<dbReference type="SMR" id="A5E708"/>
<dbReference type="FunCoup" id="A5E708">
    <property type="interactions" value="106"/>
</dbReference>
<dbReference type="STRING" id="379508.A5E708"/>
<dbReference type="GeneID" id="5230489"/>
<dbReference type="KEGG" id="lel:PVL30_002498"/>
<dbReference type="VEuPathDB" id="FungiDB:LELG_05397"/>
<dbReference type="eggNOG" id="KOG2968">
    <property type="taxonomic scope" value="Eukaryota"/>
</dbReference>
<dbReference type="HOGENOM" id="CLU_000960_1_1_1"/>
<dbReference type="InParanoid" id="A5E708"/>
<dbReference type="OMA" id="SSGYVWR"/>
<dbReference type="OrthoDB" id="421051at2759"/>
<dbReference type="Proteomes" id="UP000001996">
    <property type="component" value="Unassembled WGS sequence"/>
</dbReference>
<dbReference type="GO" id="GO:0005789">
    <property type="term" value="C:endoplasmic reticulum membrane"/>
    <property type="evidence" value="ECO:0007669"/>
    <property type="project" value="UniProtKB-SubCell"/>
</dbReference>
<dbReference type="GO" id="GO:0004622">
    <property type="term" value="F:lysophospholipase activity"/>
    <property type="evidence" value="ECO:0007669"/>
    <property type="project" value="UniProtKB-EC"/>
</dbReference>
<dbReference type="GO" id="GO:0046486">
    <property type="term" value="P:glycerolipid metabolic process"/>
    <property type="evidence" value="ECO:0007669"/>
    <property type="project" value="UniProtKB-ARBA"/>
</dbReference>
<dbReference type="GO" id="GO:0016042">
    <property type="term" value="P:lipid catabolic process"/>
    <property type="evidence" value="ECO:0007669"/>
    <property type="project" value="UniProtKB-KW"/>
</dbReference>
<dbReference type="CDD" id="cd00038">
    <property type="entry name" value="CAP_ED"/>
    <property type="match status" value="2"/>
</dbReference>
<dbReference type="FunFam" id="3.40.1090.10:FF:000013">
    <property type="entry name" value="Lysophospholipase NTE1"/>
    <property type="match status" value="1"/>
</dbReference>
<dbReference type="Gene3D" id="3.40.1090.10">
    <property type="entry name" value="Cytosolic phospholipase A2 catalytic domain"/>
    <property type="match status" value="2"/>
</dbReference>
<dbReference type="Gene3D" id="2.60.120.10">
    <property type="entry name" value="Jelly Rolls"/>
    <property type="match status" value="2"/>
</dbReference>
<dbReference type="InterPro" id="IPR016035">
    <property type="entry name" value="Acyl_Trfase/lysoPLipase"/>
</dbReference>
<dbReference type="InterPro" id="IPR000595">
    <property type="entry name" value="cNMP-bd_dom"/>
</dbReference>
<dbReference type="InterPro" id="IPR018490">
    <property type="entry name" value="cNMP-bd_dom_sf"/>
</dbReference>
<dbReference type="InterPro" id="IPR050301">
    <property type="entry name" value="NTE"/>
</dbReference>
<dbReference type="InterPro" id="IPR056556">
    <property type="entry name" value="NTE1_P-loop_dom"/>
</dbReference>
<dbReference type="InterPro" id="IPR002641">
    <property type="entry name" value="PNPLA_dom"/>
</dbReference>
<dbReference type="InterPro" id="IPR014710">
    <property type="entry name" value="RmlC-like_jellyroll"/>
</dbReference>
<dbReference type="PANTHER" id="PTHR14226:SF29">
    <property type="entry name" value="NEUROPATHY TARGET ESTERASE SWS"/>
    <property type="match status" value="1"/>
</dbReference>
<dbReference type="PANTHER" id="PTHR14226">
    <property type="entry name" value="NEUROPATHY TARGET ESTERASE/SWISS CHEESE D.MELANOGASTER"/>
    <property type="match status" value="1"/>
</dbReference>
<dbReference type="Pfam" id="PF00027">
    <property type="entry name" value="cNMP_binding"/>
    <property type="match status" value="1"/>
</dbReference>
<dbReference type="Pfam" id="PF24179">
    <property type="entry name" value="NTE_Ploop"/>
    <property type="match status" value="1"/>
</dbReference>
<dbReference type="Pfam" id="PF01734">
    <property type="entry name" value="Patatin"/>
    <property type="match status" value="1"/>
</dbReference>
<dbReference type="SMART" id="SM00100">
    <property type="entry name" value="cNMP"/>
    <property type="match status" value="1"/>
</dbReference>
<dbReference type="SUPFAM" id="SSF51206">
    <property type="entry name" value="cAMP-binding domain-like"/>
    <property type="match status" value="2"/>
</dbReference>
<dbReference type="SUPFAM" id="SSF52151">
    <property type="entry name" value="FabD/lysophospholipase-like"/>
    <property type="match status" value="1"/>
</dbReference>
<dbReference type="PROSITE" id="PS50042">
    <property type="entry name" value="CNMP_BINDING_3"/>
    <property type="match status" value="2"/>
</dbReference>
<dbReference type="PROSITE" id="PS51635">
    <property type="entry name" value="PNPLA"/>
    <property type="match status" value="1"/>
</dbReference>
<keyword id="KW-0256">Endoplasmic reticulum</keyword>
<keyword id="KW-0378">Hydrolase</keyword>
<keyword id="KW-0442">Lipid degradation</keyword>
<keyword id="KW-0443">Lipid metabolism</keyword>
<keyword id="KW-0472">Membrane</keyword>
<keyword id="KW-1185">Reference proteome</keyword>
<keyword id="KW-0677">Repeat</keyword>
<keyword id="KW-0812">Transmembrane</keyword>
<keyword id="KW-1133">Transmembrane helix</keyword>